<accession>C3P2A0</accession>
<evidence type="ECO:0000255" key="1">
    <source>
        <dbReference type="HAMAP-Rule" id="MF_01227"/>
    </source>
</evidence>
<keyword id="KW-0067">ATP-binding</keyword>
<keyword id="KW-0315">Glutamine amidotransferase</keyword>
<keyword id="KW-0436">Ligase</keyword>
<keyword id="KW-0460">Magnesium</keyword>
<keyword id="KW-0479">Metal-binding</keyword>
<keyword id="KW-0547">Nucleotide-binding</keyword>
<keyword id="KW-0665">Pyrimidine biosynthesis</keyword>
<proteinExistence type="inferred from homology"/>
<protein>
    <recommendedName>
        <fullName evidence="1">CTP synthase</fullName>
        <ecNumber evidence="1">6.3.4.2</ecNumber>
    </recommendedName>
    <alternativeName>
        <fullName evidence="1">Cytidine 5'-triphosphate synthase</fullName>
    </alternativeName>
    <alternativeName>
        <fullName evidence="1">Cytidine triphosphate synthetase</fullName>
        <shortName evidence="1">CTP synthetase</shortName>
        <shortName evidence="1">CTPS</shortName>
    </alternativeName>
    <alternativeName>
        <fullName evidence="1">UTP--ammonia ligase</fullName>
    </alternativeName>
</protein>
<gene>
    <name evidence="1" type="primary">pyrG</name>
    <name type="ordered locus">BAA_5608</name>
</gene>
<sequence length="535" mass="59753">MTKYIFVTGGVVSSLGKGITAASLGRLLKNRGLNVTIQKFDPYINVDPGTMSPYQHGEVFVTDDGAETDLDLGHYERFIDINLNKYSNVTTGKIYSSVLQKERRGEYLGGTVQVIPHITNEIKERVYRSGRETNADVVITEIGGTVGDIESLPFLEAIRQIKSDIGRDNVMYIHCTLIPYLKAAGEMKTKPTQHSVKELRSLGIQPNIIVVRTEMPVSQDMKDKLALFCDIDTKAVIEARDADTLYAVPLSLQEQNMDQIVCDHLKLDNPAADMTEWTALVEKVRNLSKKTKIALVGKYVELQDAYISVVEALRHAGYSFDTDVEVKWVNAEHVTAENVQELVGDTDGILVPGGFGDRGVEGKIVAIQYARENKVPFLGICLGMQLASIEFARNVLGLEGANSSEINPDTPYAIIDLLPEQKDVEDLGGTLRLGLYPCKLSEETNAYNAYNEPVVYERHRHRYEFNNQFRPDMEKAGFVFSGTSPDGRLVEIIELKDHPWFVAAQFHPELVSRPNRPQPLFHDFVKASLTNKESK</sequence>
<dbReference type="EC" id="6.3.4.2" evidence="1"/>
<dbReference type="EMBL" id="CP001598">
    <property type="protein sequence ID" value="ACQ50675.1"/>
    <property type="molecule type" value="Genomic_DNA"/>
</dbReference>
<dbReference type="RefSeq" id="WP_000170456.1">
    <property type="nucleotide sequence ID" value="NC_012659.1"/>
</dbReference>
<dbReference type="SMR" id="C3P2A0"/>
<dbReference type="MEROPS" id="C26.964"/>
<dbReference type="GeneID" id="45025168"/>
<dbReference type="KEGG" id="bai:BAA_5608"/>
<dbReference type="HOGENOM" id="CLU_011675_5_0_9"/>
<dbReference type="UniPathway" id="UPA00159">
    <property type="reaction ID" value="UER00277"/>
</dbReference>
<dbReference type="GO" id="GO:0005829">
    <property type="term" value="C:cytosol"/>
    <property type="evidence" value="ECO:0007669"/>
    <property type="project" value="TreeGrafter"/>
</dbReference>
<dbReference type="GO" id="GO:0005524">
    <property type="term" value="F:ATP binding"/>
    <property type="evidence" value="ECO:0007669"/>
    <property type="project" value="UniProtKB-KW"/>
</dbReference>
<dbReference type="GO" id="GO:0003883">
    <property type="term" value="F:CTP synthase activity"/>
    <property type="evidence" value="ECO:0007669"/>
    <property type="project" value="UniProtKB-UniRule"/>
</dbReference>
<dbReference type="GO" id="GO:0004359">
    <property type="term" value="F:glutaminase activity"/>
    <property type="evidence" value="ECO:0007669"/>
    <property type="project" value="RHEA"/>
</dbReference>
<dbReference type="GO" id="GO:0042802">
    <property type="term" value="F:identical protein binding"/>
    <property type="evidence" value="ECO:0007669"/>
    <property type="project" value="TreeGrafter"/>
</dbReference>
<dbReference type="GO" id="GO:0046872">
    <property type="term" value="F:metal ion binding"/>
    <property type="evidence" value="ECO:0007669"/>
    <property type="project" value="UniProtKB-KW"/>
</dbReference>
<dbReference type="GO" id="GO:0044210">
    <property type="term" value="P:'de novo' CTP biosynthetic process"/>
    <property type="evidence" value="ECO:0007669"/>
    <property type="project" value="UniProtKB-UniRule"/>
</dbReference>
<dbReference type="GO" id="GO:0019856">
    <property type="term" value="P:pyrimidine nucleobase biosynthetic process"/>
    <property type="evidence" value="ECO:0007669"/>
    <property type="project" value="TreeGrafter"/>
</dbReference>
<dbReference type="CDD" id="cd03113">
    <property type="entry name" value="CTPS_N"/>
    <property type="match status" value="1"/>
</dbReference>
<dbReference type="CDD" id="cd01746">
    <property type="entry name" value="GATase1_CTP_Synthase"/>
    <property type="match status" value="1"/>
</dbReference>
<dbReference type="FunFam" id="3.40.50.300:FF:000009">
    <property type="entry name" value="CTP synthase"/>
    <property type="match status" value="1"/>
</dbReference>
<dbReference type="FunFam" id="3.40.50.880:FF:000002">
    <property type="entry name" value="CTP synthase"/>
    <property type="match status" value="1"/>
</dbReference>
<dbReference type="Gene3D" id="3.40.50.880">
    <property type="match status" value="1"/>
</dbReference>
<dbReference type="Gene3D" id="3.40.50.300">
    <property type="entry name" value="P-loop containing nucleotide triphosphate hydrolases"/>
    <property type="match status" value="1"/>
</dbReference>
<dbReference type="HAMAP" id="MF_01227">
    <property type="entry name" value="PyrG"/>
    <property type="match status" value="1"/>
</dbReference>
<dbReference type="InterPro" id="IPR029062">
    <property type="entry name" value="Class_I_gatase-like"/>
</dbReference>
<dbReference type="InterPro" id="IPR004468">
    <property type="entry name" value="CTP_synthase"/>
</dbReference>
<dbReference type="InterPro" id="IPR017456">
    <property type="entry name" value="CTP_synthase_N"/>
</dbReference>
<dbReference type="InterPro" id="IPR017926">
    <property type="entry name" value="GATASE"/>
</dbReference>
<dbReference type="InterPro" id="IPR033828">
    <property type="entry name" value="GATase1_CTP_Synthase"/>
</dbReference>
<dbReference type="InterPro" id="IPR027417">
    <property type="entry name" value="P-loop_NTPase"/>
</dbReference>
<dbReference type="NCBIfam" id="NF003792">
    <property type="entry name" value="PRK05380.1"/>
    <property type="match status" value="1"/>
</dbReference>
<dbReference type="NCBIfam" id="TIGR00337">
    <property type="entry name" value="PyrG"/>
    <property type="match status" value="1"/>
</dbReference>
<dbReference type="PANTHER" id="PTHR11550">
    <property type="entry name" value="CTP SYNTHASE"/>
    <property type="match status" value="1"/>
</dbReference>
<dbReference type="PANTHER" id="PTHR11550:SF0">
    <property type="entry name" value="CTP SYNTHASE-RELATED"/>
    <property type="match status" value="1"/>
</dbReference>
<dbReference type="Pfam" id="PF06418">
    <property type="entry name" value="CTP_synth_N"/>
    <property type="match status" value="1"/>
</dbReference>
<dbReference type="Pfam" id="PF00117">
    <property type="entry name" value="GATase"/>
    <property type="match status" value="1"/>
</dbReference>
<dbReference type="SUPFAM" id="SSF52317">
    <property type="entry name" value="Class I glutamine amidotransferase-like"/>
    <property type="match status" value="1"/>
</dbReference>
<dbReference type="SUPFAM" id="SSF52540">
    <property type="entry name" value="P-loop containing nucleoside triphosphate hydrolases"/>
    <property type="match status" value="1"/>
</dbReference>
<dbReference type="PROSITE" id="PS51273">
    <property type="entry name" value="GATASE_TYPE_1"/>
    <property type="match status" value="1"/>
</dbReference>
<organism>
    <name type="scientific">Bacillus anthracis (strain A0248)</name>
    <dbReference type="NCBI Taxonomy" id="592021"/>
    <lineage>
        <taxon>Bacteria</taxon>
        <taxon>Bacillati</taxon>
        <taxon>Bacillota</taxon>
        <taxon>Bacilli</taxon>
        <taxon>Bacillales</taxon>
        <taxon>Bacillaceae</taxon>
        <taxon>Bacillus</taxon>
        <taxon>Bacillus cereus group</taxon>
    </lineage>
</organism>
<comment type="function">
    <text evidence="1">Catalyzes the ATP-dependent amination of UTP to CTP with either L-glutamine or ammonia as the source of nitrogen. Regulates intracellular CTP levels through interactions with the four ribonucleotide triphosphates.</text>
</comment>
<comment type="catalytic activity">
    <reaction evidence="1">
        <text>UTP + L-glutamine + ATP + H2O = CTP + L-glutamate + ADP + phosphate + 2 H(+)</text>
        <dbReference type="Rhea" id="RHEA:26426"/>
        <dbReference type="ChEBI" id="CHEBI:15377"/>
        <dbReference type="ChEBI" id="CHEBI:15378"/>
        <dbReference type="ChEBI" id="CHEBI:29985"/>
        <dbReference type="ChEBI" id="CHEBI:30616"/>
        <dbReference type="ChEBI" id="CHEBI:37563"/>
        <dbReference type="ChEBI" id="CHEBI:43474"/>
        <dbReference type="ChEBI" id="CHEBI:46398"/>
        <dbReference type="ChEBI" id="CHEBI:58359"/>
        <dbReference type="ChEBI" id="CHEBI:456216"/>
        <dbReference type="EC" id="6.3.4.2"/>
    </reaction>
</comment>
<comment type="catalytic activity">
    <reaction evidence="1">
        <text>L-glutamine + H2O = L-glutamate + NH4(+)</text>
        <dbReference type="Rhea" id="RHEA:15889"/>
        <dbReference type="ChEBI" id="CHEBI:15377"/>
        <dbReference type="ChEBI" id="CHEBI:28938"/>
        <dbReference type="ChEBI" id="CHEBI:29985"/>
        <dbReference type="ChEBI" id="CHEBI:58359"/>
    </reaction>
</comment>
<comment type="catalytic activity">
    <reaction evidence="1">
        <text>UTP + NH4(+) + ATP = CTP + ADP + phosphate + 2 H(+)</text>
        <dbReference type="Rhea" id="RHEA:16597"/>
        <dbReference type="ChEBI" id="CHEBI:15378"/>
        <dbReference type="ChEBI" id="CHEBI:28938"/>
        <dbReference type="ChEBI" id="CHEBI:30616"/>
        <dbReference type="ChEBI" id="CHEBI:37563"/>
        <dbReference type="ChEBI" id="CHEBI:43474"/>
        <dbReference type="ChEBI" id="CHEBI:46398"/>
        <dbReference type="ChEBI" id="CHEBI:456216"/>
    </reaction>
</comment>
<comment type="activity regulation">
    <text evidence="1">Allosterically activated by GTP, when glutamine is the substrate; GTP has no effect on the reaction when ammonia is the substrate. The allosteric effector GTP functions by stabilizing the protein conformation that binds the tetrahedral intermediate(s) formed during glutamine hydrolysis. Inhibited by the product CTP, via allosteric rather than competitive inhibition.</text>
</comment>
<comment type="pathway">
    <text evidence="1">Pyrimidine metabolism; CTP biosynthesis via de novo pathway; CTP from UDP: step 2/2.</text>
</comment>
<comment type="subunit">
    <text evidence="1">Homotetramer.</text>
</comment>
<comment type="miscellaneous">
    <text evidence="1">CTPSs have evolved a hybrid strategy for distinguishing between UTP and CTP. The overlapping regions of the product feedback inhibitory and substrate sites recognize a common feature in both compounds, the triphosphate moiety. To differentiate isosteric substrate and product pyrimidine rings, an additional pocket far from the expected kinase/ligase catalytic site, specifically recognizes the cytosine and ribose portions of the product inhibitor.</text>
</comment>
<comment type="similarity">
    <text evidence="1">Belongs to the CTP synthase family.</text>
</comment>
<reference key="1">
    <citation type="submission" date="2009-04" db="EMBL/GenBank/DDBJ databases">
        <title>Genome sequence of Bacillus anthracis A0248.</title>
        <authorList>
            <person name="Dodson R.J."/>
            <person name="Munk A.C."/>
            <person name="Bruce D."/>
            <person name="Detter C."/>
            <person name="Tapia R."/>
            <person name="Sutton G."/>
            <person name="Sims D."/>
            <person name="Brettin T."/>
        </authorList>
    </citation>
    <scope>NUCLEOTIDE SEQUENCE [LARGE SCALE GENOMIC DNA]</scope>
    <source>
        <strain>A0248</strain>
    </source>
</reference>
<name>PYRG_BACAA</name>
<feature type="chain" id="PRO_1000164925" description="CTP synthase">
    <location>
        <begin position="1"/>
        <end position="535"/>
    </location>
</feature>
<feature type="domain" description="Glutamine amidotransferase type-1" evidence="1">
    <location>
        <begin position="292"/>
        <end position="534"/>
    </location>
</feature>
<feature type="region of interest" description="Amidoligase domain" evidence="1">
    <location>
        <begin position="1"/>
        <end position="267"/>
    </location>
</feature>
<feature type="active site" description="Nucleophile; for glutamine hydrolysis" evidence="1">
    <location>
        <position position="381"/>
    </location>
</feature>
<feature type="active site" evidence="1">
    <location>
        <position position="507"/>
    </location>
</feature>
<feature type="active site" evidence="1">
    <location>
        <position position="509"/>
    </location>
</feature>
<feature type="binding site" evidence="1">
    <location>
        <position position="13"/>
    </location>
    <ligand>
        <name>CTP</name>
        <dbReference type="ChEBI" id="CHEBI:37563"/>
        <note>allosteric inhibitor</note>
    </ligand>
</feature>
<feature type="binding site" evidence="1">
    <location>
        <position position="13"/>
    </location>
    <ligand>
        <name>UTP</name>
        <dbReference type="ChEBI" id="CHEBI:46398"/>
    </ligand>
</feature>
<feature type="binding site" evidence="1">
    <location>
        <begin position="14"/>
        <end position="19"/>
    </location>
    <ligand>
        <name>ATP</name>
        <dbReference type="ChEBI" id="CHEBI:30616"/>
    </ligand>
</feature>
<feature type="binding site" evidence="1">
    <location>
        <position position="54"/>
    </location>
    <ligand>
        <name>L-glutamine</name>
        <dbReference type="ChEBI" id="CHEBI:58359"/>
    </ligand>
</feature>
<feature type="binding site" evidence="1">
    <location>
        <position position="71"/>
    </location>
    <ligand>
        <name>ATP</name>
        <dbReference type="ChEBI" id="CHEBI:30616"/>
    </ligand>
</feature>
<feature type="binding site" evidence="1">
    <location>
        <position position="71"/>
    </location>
    <ligand>
        <name>Mg(2+)</name>
        <dbReference type="ChEBI" id="CHEBI:18420"/>
    </ligand>
</feature>
<feature type="binding site" evidence="1">
    <location>
        <position position="141"/>
    </location>
    <ligand>
        <name>Mg(2+)</name>
        <dbReference type="ChEBI" id="CHEBI:18420"/>
    </ligand>
</feature>
<feature type="binding site" evidence="1">
    <location>
        <begin position="148"/>
        <end position="150"/>
    </location>
    <ligand>
        <name>CTP</name>
        <dbReference type="ChEBI" id="CHEBI:37563"/>
        <note>allosteric inhibitor</note>
    </ligand>
</feature>
<feature type="binding site" evidence="1">
    <location>
        <begin position="188"/>
        <end position="193"/>
    </location>
    <ligand>
        <name>CTP</name>
        <dbReference type="ChEBI" id="CHEBI:37563"/>
        <note>allosteric inhibitor</note>
    </ligand>
</feature>
<feature type="binding site" evidence="1">
    <location>
        <begin position="188"/>
        <end position="193"/>
    </location>
    <ligand>
        <name>UTP</name>
        <dbReference type="ChEBI" id="CHEBI:46398"/>
    </ligand>
</feature>
<feature type="binding site" evidence="1">
    <location>
        <position position="224"/>
    </location>
    <ligand>
        <name>CTP</name>
        <dbReference type="ChEBI" id="CHEBI:37563"/>
        <note>allosteric inhibitor</note>
    </ligand>
</feature>
<feature type="binding site" evidence="1">
    <location>
        <position position="224"/>
    </location>
    <ligand>
        <name>UTP</name>
        <dbReference type="ChEBI" id="CHEBI:46398"/>
    </ligand>
</feature>
<feature type="binding site" evidence="1">
    <location>
        <begin position="240"/>
        <end position="242"/>
    </location>
    <ligand>
        <name>ATP</name>
        <dbReference type="ChEBI" id="CHEBI:30616"/>
    </ligand>
</feature>
<feature type="binding site" evidence="1">
    <location>
        <position position="354"/>
    </location>
    <ligand>
        <name>L-glutamine</name>
        <dbReference type="ChEBI" id="CHEBI:58359"/>
    </ligand>
</feature>
<feature type="binding site" evidence="1">
    <location>
        <begin position="382"/>
        <end position="385"/>
    </location>
    <ligand>
        <name>L-glutamine</name>
        <dbReference type="ChEBI" id="CHEBI:58359"/>
    </ligand>
</feature>
<feature type="binding site" evidence="1">
    <location>
        <position position="405"/>
    </location>
    <ligand>
        <name>L-glutamine</name>
        <dbReference type="ChEBI" id="CHEBI:58359"/>
    </ligand>
</feature>
<feature type="binding site" evidence="1">
    <location>
        <position position="462"/>
    </location>
    <ligand>
        <name>L-glutamine</name>
        <dbReference type="ChEBI" id="CHEBI:58359"/>
    </ligand>
</feature>